<evidence type="ECO:0000255" key="1"/>
<evidence type="ECO:0000255" key="2">
    <source>
        <dbReference type="PROSITE-ProRule" id="PRU00190"/>
    </source>
</evidence>
<evidence type="ECO:0000269" key="3">
    <source>
    </source>
</evidence>
<evidence type="ECO:0000269" key="4">
    <source>
    </source>
</evidence>
<evidence type="ECO:0000269" key="5">
    <source>
    </source>
</evidence>
<evidence type="ECO:0000269" key="6">
    <source>
    </source>
</evidence>
<evidence type="ECO:0000303" key="7">
    <source>
    </source>
</evidence>
<evidence type="ECO:0000303" key="8">
    <source>
    </source>
</evidence>
<evidence type="ECO:0000305" key="9"/>
<evidence type="ECO:0000312" key="10">
    <source>
        <dbReference type="Araport" id="AT4G20130"/>
    </source>
</evidence>
<evidence type="ECO:0000312" key="11">
    <source>
        <dbReference type="EMBL" id="CAA16620.1"/>
    </source>
</evidence>
<evidence type="ECO:0000312" key="12">
    <source>
        <dbReference type="EMBL" id="CAB79012.1"/>
    </source>
</evidence>
<reference key="1">
    <citation type="journal article" date="1999" name="Nature">
        <title>Sequence and analysis of chromosome 4 of the plant Arabidopsis thaliana.</title>
        <authorList>
            <person name="Mayer K.F.X."/>
            <person name="Schueller C."/>
            <person name="Wambutt R."/>
            <person name="Murphy G."/>
            <person name="Volckaert G."/>
            <person name="Pohl T."/>
            <person name="Duesterhoeft A."/>
            <person name="Stiekema W."/>
            <person name="Entian K.-D."/>
            <person name="Terryn N."/>
            <person name="Harris B."/>
            <person name="Ansorge W."/>
            <person name="Brandt P."/>
            <person name="Grivell L.A."/>
            <person name="Rieger M."/>
            <person name="Weichselgartner M."/>
            <person name="de Simone V."/>
            <person name="Obermaier B."/>
            <person name="Mache R."/>
            <person name="Mueller M."/>
            <person name="Kreis M."/>
            <person name="Delseny M."/>
            <person name="Puigdomenech P."/>
            <person name="Watson M."/>
            <person name="Schmidtheini T."/>
            <person name="Reichert B."/>
            <person name="Portetelle D."/>
            <person name="Perez-Alonso M."/>
            <person name="Boutry M."/>
            <person name="Bancroft I."/>
            <person name="Vos P."/>
            <person name="Hoheisel J."/>
            <person name="Zimmermann W."/>
            <person name="Wedler H."/>
            <person name="Ridley P."/>
            <person name="Langham S.-A."/>
            <person name="McCullagh B."/>
            <person name="Bilham L."/>
            <person name="Robben J."/>
            <person name="van der Schueren J."/>
            <person name="Grymonprez B."/>
            <person name="Chuang Y.-J."/>
            <person name="Vandenbussche F."/>
            <person name="Braeken M."/>
            <person name="Weltjens I."/>
            <person name="Voet M."/>
            <person name="Bastiaens I."/>
            <person name="Aert R."/>
            <person name="Defoor E."/>
            <person name="Weitzenegger T."/>
            <person name="Bothe G."/>
            <person name="Ramsperger U."/>
            <person name="Hilbert H."/>
            <person name="Braun M."/>
            <person name="Holzer E."/>
            <person name="Brandt A."/>
            <person name="Peters S."/>
            <person name="van Staveren M."/>
            <person name="Dirkse W."/>
            <person name="Mooijman P."/>
            <person name="Klein Lankhorst R."/>
            <person name="Rose M."/>
            <person name="Hauf J."/>
            <person name="Koetter P."/>
            <person name="Berneiser S."/>
            <person name="Hempel S."/>
            <person name="Feldpausch M."/>
            <person name="Lamberth S."/>
            <person name="Van den Daele H."/>
            <person name="De Keyser A."/>
            <person name="Buysshaert C."/>
            <person name="Gielen J."/>
            <person name="Villarroel R."/>
            <person name="De Clercq R."/>
            <person name="van Montagu M."/>
            <person name="Rogers J."/>
            <person name="Cronin A."/>
            <person name="Quail M.A."/>
            <person name="Bray-Allen S."/>
            <person name="Clark L."/>
            <person name="Doggett J."/>
            <person name="Hall S."/>
            <person name="Kay M."/>
            <person name="Lennard N."/>
            <person name="McLay K."/>
            <person name="Mayes R."/>
            <person name="Pettett A."/>
            <person name="Rajandream M.A."/>
            <person name="Lyne M."/>
            <person name="Benes V."/>
            <person name="Rechmann S."/>
            <person name="Borkova D."/>
            <person name="Bloecker H."/>
            <person name="Scharfe M."/>
            <person name="Grimm M."/>
            <person name="Loehnert T.-H."/>
            <person name="Dose S."/>
            <person name="de Haan M."/>
            <person name="Maarse A.C."/>
            <person name="Schaefer M."/>
            <person name="Mueller-Auer S."/>
            <person name="Gabel C."/>
            <person name="Fuchs M."/>
            <person name="Fartmann B."/>
            <person name="Granderath K."/>
            <person name="Dauner D."/>
            <person name="Herzl A."/>
            <person name="Neumann S."/>
            <person name="Argiriou A."/>
            <person name="Vitale D."/>
            <person name="Liguori R."/>
            <person name="Piravandi E."/>
            <person name="Massenet O."/>
            <person name="Quigley F."/>
            <person name="Clabauld G."/>
            <person name="Muendlein A."/>
            <person name="Felber R."/>
            <person name="Schnabl S."/>
            <person name="Hiller R."/>
            <person name="Schmidt W."/>
            <person name="Lecharny A."/>
            <person name="Aubourg S."/>
            <person name="Chefdor F."/>
            <person name="Cooke R."/>
            <person name="Berger C."/>
            <person name="Monfort A."/>
            <person name="Casacuberta E."/>
            <person name="Gibbons T."/>
            <person name="Weber N."/>
            <person name="Vandenbol M."/>
            <person name="Bargues M."/>
            <person name="Terol J."/>
            <person name="Torres A."/>
            <person name="Perez-Perez A."/>
            <person name="Purnelle B."/>
            <person name="Bent E."/>
            <person name="Johnson S."/>
            <person name="Tacon D."/>
            <person name="Jesse T."/>
            <person name="Heijnen L."/>
            <person name="Schwarz S."/>
            <person name="Scholler P."/>
            <person name="Heber S."/>
            <person name="Francs P."/>
            <person name="Bielke C."/>
            <person name="Frishman D."/>
            <person name="Haase D."/>
            <person name="Lemcke K."/>
            <person name="Mewes H.-W."/>
            <person name="Stocker S."/>
            <person name="Zaccaria P."/>
            <person name="Bevan M."/>
            <person name="Wilson R.K."/>
            <person name="de la Bastide M."/>
            <person name="Habermann K."/>
            <person name="Parnell L."/>
            <person name="Dedhia N."/>
            <person name="Gnoj L."/>
            <person name="Schutz K."/>
            <person name="Huang E."/>
            <person name="Spiegel L."/>
            <person name="Sekhon M."/>
            <person name="Murray J."/>
            <person name="Sheet P."/>
            <person name="Cordes M."/>
            <person name="Abu-Threideh J."/>
            <person name="Stoneking T."/>
            <person name="Kalicki J."/>
            <person name="Graves T."/>
            <person name="Harmon G."/>
            <person name="Edwards J."/>
            <person name="Latreille P."/>
            <person name="Courtney L."/>
            <person name="Cloud J."/>
            <person name="Abbott A."/>
            <person name="Scott K."/>
            <person name="Johnson D."/>
            <person name="Minx P."/>
            <person name="Bentley D."/>
            <person name="Fulton B."/>
            <person name="Miller N."/>
            <person name="Greco T."/>
            <person name="Kemp K."/>
            <person name="Kramer J."/>
            <person name="Fulton L."/>
            <person name="Mardis E."/>
            <person name="Dante M."/>
            <person name="Pepin K."/>
            <person name="Hillier L.W."/>
            <person name="Nelson J."/>
            <person name="Spieth J."/>
            <person name="Ryan E."/>
            <person name="Andrews S."/>
            <person name="Geisel C."/>
            <person name="Layman D."/>
            <person name="Du H."/>
            <person name="Ali J."/>
            <person name="Berghoff A."/>
            <person name="Jones K."/>
            <person name="Drone K."/>
            <person name="Cotton M."/>
            <person name="Joshu C."/>
            <person name="Antonoiu B."/>
            <person name="Zidanic M."/>
            <person name="Strong C."/>
            <person name="Sun H."/>
            <person name="Lamar B."/>
            <person name="Yordan C."/>
            <person name="Ma P."/>
            <person name="Zhong J."/>
            <person name="Preston R."/>
            <person name="Vil D."/>
            <person name="Shekher M."/>
            <person name="Matero A."/>
            <person name="Shah R."/>
            <person name="Swaby I.K."/>
            <person name="O'Shaughnessy A."/>
            <person name="Rodriguez M."/>
            <person name="Hoffman J."/>
            <person name="Till S."/>
            <person name="Granat S."/>
            <person name="Shohdy N."/>
            <person name="Hasegawa A."/>
            <person name="Hameed A."/>
            <person name="Lodhi M."/>
            <person name="Johnson A."/>
            <person name="Chen E."/>
            <person name="Marra M.A."/>
            <person name="Martienssen R."/>
            <person name="McCombie W.R."/>
        </authorList>
    </citation>
    <scope>NUCLEOTIDE SEQUENCE [LARGE SCALE GENOMIC DNA]</scope>
    <source>
        <strain>cv. Columbia</strain>
    </source>
</reference>
<reference key="2">
    <citation type="journal article" date="2017" name="Plant J.">
        <title>Araport11: a complete reannotation of the Arabidopsis thaliana reference genome.</title>
        <authorList>
            <person name="Cheng C.Y."/>
            <person name="Krishnakumar V."/>
            <person name="Chan A.P."/>
            <person name="Thibaud-Nissen F."/>
            <person name="Schobel S."/>
            <person name="Town C.D."/>
        </authorList>
    </citation>
    <scope>GENOME REANNOTATION</scope>
    <source>
        <strain>cv. Columbia</strain>
    </source>
</reference>
<reference key="3">
    <citation type="journal article" date="2003" name="Science">
        <title>Empirical analysis of transcriptional activity in the Arabidopsis genome.</title>
        <authorList>
            <person name="Yamada K."/>
            <person name="Lim J."/>
            <person name="Dale J.M."/>
            <person name="Chen H."/>
            <person name="Shinn P."/>
            <person name="Palm C.J."/>
            <person name="Southwick A.M."/>
            <person name="Wu H.C."/>
            <person name="Kim C.J."/>
            <person name="Nguyen M."/>
            <person name="Pham P.K."/>
            <person name="Cheuk R.F."/>
            <person name="Karlin-Newmann G."/>
            <person name="Liu S.X."/>
            <person name="Lam B."/>
            <person name="Sakano H."/>
            <person name="Wu T."/>
            <person name="Yu G."/>
            <person name="Miranda M."/>
            <person name="Quach H.L."/>
            <person name="Tripp M."/>
            <person name="Chang C.H."/>
            <person name="Lee J.M."/>
            <person name="Toriumi M.J."/>
            <person name="Chan M.M."/>
            <person name="Tang C.C."/>
            <person name="Onodera C.S."/>
            <person name="Deng J.M."/>
            <person name="Akiyama K."/>
            <person name="Ansari Y."/>
            <person name="Arakawa T."/>
            <person name="Banh J."/>
            <person name="Banno F."/>
            <person name="Bowser L."/>
            <person name="Brooks S.Y."/>
            <person name="Carninci P."/>
            <person name="Chao Q."/>
            <person name="Choy N."/>
            <person name="Enju A."/>
            <person name="Goldsmith A.D."/>
            <person name="Gurjal M."/>
            <person name="Hansen N.F."/>
            <person name="Hayashizaki Y."/>
            <person name="Johnson-Hopson C."/>
            <person name="Hsuan V.W."/>
            <person name="Iida K."/>
            <person name="Karnes M."/>
            <person name="Khan S."/>
            <person name="Koesema E."/>
            <person name="Ishida J."/>
            <person name="Jiang P.X."/>
            <person name="Jones T."/>
            <person name="Kawai J."/>
            <person name="Kamiya A."/>
            <person name="Meyers C."/>
            <person name="Nakajima M."/>
            <person name="Narusaka M."/>
            <person name="Seki M."/>
            <person name="Sakurai T."/>
            <person name="Satou M."/>
            <person name="Tamse R."/>
            <person name="Vaysberg M."/>
            <person name="Wallender E.K."/>
            <person name="Wong C."/>
            <person name="Yamamura Y."/>
            <person name="Yuan S."/>
            <person name="Shinozaki K."/>
            <person name="Davis R.W."/>
            <person name="Theologis A."/>
            <person name="Ecker J.R."/>
        </authorList>
    </citation>
    <scope>NUCLEOTIDE SEQUENCE [LARGE SCALE MRNA]</scope>
    <source>
        <strain>cv. Columbia</strain>
    </source>
</reference>
<reference key="4">
    <citation type="submission" date="2006-07" db="EMBL/GenBank/DDBJ databases">
        <title>Large-scale analysis of RIKEN Arabidopsis full-length (RAFL) cDNAs.</title>
        <authorList>
            <person name="Totoki Y."/>
            <person name="Seki M."/>
            <person name="Ishida J."/>
            <person name="Nakajima M."/>
            <person name="Enju A."/>
            <person name="Kamiya A."/>
            <person name="Narusaka M."/>
            <person name="Shin-i T."/>
            <person name="Nakagawa M."/>
            <person name="Sakamoto N."/>
            <person name="Oishi K."/>
            <person name="Kohara Y."/>
            <person name="Kobayashi M."/>
            <person name="Toyoda A."/>
            <person name="Sakaki Y."/>
            <person name="Sakurai T."/>
            <person name="Iida K."/>
            <person name="Akiyama K."/>
            <person name="Satou M."/>
            <person name="Toyoda T."/>
            <person name="Konagaya A."/>
            <person name="Carninci P."/>
            <person name="Kawai J."/>
            <person name="Hayashizaki Y."/>
            <person name="Shinozaki K."/>
        </authorList>
    </citation>
    <scope>NUCLEOTIDE SEQUENCE [LARGE SCALE MRNA]</scope>
    <source>
        <strain>cv. Columbia</strain>
    </source>
</reference>
<reference key="5">
    <citation type="journal article" date="2006" name="Plant Cell">
        <title>pTAC2, -6, and -12 are components of the transcriptionally active plastid chromosome that are required for plastid gene expression.</title>
        <authorList>
            <person name="Pfalz J."/>
            <person name="Liere K."/>
            <person name="Kandlbinder A."/>
            <person name="Dietz K.-J."/>
            <person name="Oelmueller R."/>
        </authorList>
    </citation>
    <scope>NOMENCLATURE</scope>
</reference>
<reference key="6">
    <citation type="journal article" date="2011" name="Plant Physiol.">
        <title>Identification of essential subunits in the plastid-encoded RNA polymerase complex reveals building blocks for proper plastid development.</title>
        <authorList>
            <person name="Steiner S."/>
            <person name="Schroeter Y."/>
            <person name="Pfalz J."/>
            <person name="Pfannschmidt T."/>
        </authorList>
    </citation>
    <scope>IDENTIFICATION BY MASS SPECTROMETRY</scope>
    <scope>SUBUNIT</scope>
</reference>
<reference key="7">
    <citation type="journal article" date="2011" name="Plant Physiol.">
        <title>A functional component of the transcriptionally active chromosome complex, Arabidopsis pTAC14, interacts with pTAC12/HEMERA and regulates plastid gene expression.</title>
        <authorList>
            <person name="Gao Z.-P."/>
            <person name="Yu Q.-B."/>
            <person name="Zhao T.-T."/>
            <person name="Ma Q."/>
            <person name="Chen G.-X."/>
            <person name="Yang Z.-N."/>
        </authorList>
    </citation>
    <scope>FUNCTION</scope>
    <scope>DISRUPTION PHENOTYPE</scope>
    <scope>INTERACTION WITH PTAC12/HMR/PAP5</scope>
    <scope>INDUCTION BY LIGHT</scope>
    <scope>SUBCELLULAR LOCATION</scope>
    <scope>TISSUE SPECIFICITY</scope>
    <source>
        <strain>cv. Columbia</strain>
    </source>
</reference>
<reference key="8">
    <citation type="journal article" date="2012" name="Plant Signal. Behav.">
        <title>Regulatory role of Arabidopsis pTAC14 in chloroplast development and plastid gene expression.</title>
        <authorList>
            <person name="Gao Z.-P."/>
            <person name="Chen G.-X."/>
            <person name="Yang Z.-N."/>
        </authorList>
    </citation>
    <scope>REVIEW</scope>
</reference>
<reference key="9">
    <citation type="journal article" date="2013" name="Physiol. Plantarum">
        <title>TAC7, an essential component of the plastid transcriptionally active chromosome complex, interacts with FLN1, TAC10, TAC12 and TAC14 to regulate chloroplast gene expression in Arabidopsis thaliana.</title>
        <authorList>
            <person name="Yu Q.-B."/>
            <person name="Lu Y."/>
            <person name="Ma Q."/>
            <person name="Zhao T.-T."/>
            <person name="Huang C."/>
            <person name="Zhao H.-F."/>
            <person name="Zhang X.-L."/>
            <person name="Lv R.-H."/>
            <person name="Yang Z.-N."/>
        </authorList>
    </citation>
    <scope>INTERACTION WITH PTAC7</scope>
</reference>
<reference key="10">
    <citation type="journal article" date="2020" name="Biomolecules">
        <title>Cytokinin-regulated expression of Arabidopsis thaliana PAP genes and its implication for the expression of chloroplast-encoded genes.</title>
        <authorList>
            <person name="Andreeva A.A."/>
            <person name="Vankova R."/>
            <person name="Bychkov I.A."/>
            <person name="Kudryakova N.V."/>
            <person name="Danilova M.N."/>
            <person name="Lacek J."/>
            <person name="Pojidaeva E.S."/>
            <person name="Kusnetsov V.V."/>
        </authorList>
    </citation>
    <scope>INDUCTION BY CYTOKININ</scope>
    <source>
        <strain>cv. Columbia</strain>
    </source>
</reference>
<reference key="11">
    <citation type="journal article" date="2020" name="Front. Plant Sci.">
        <title>Arabidopsis Seedling Lethal 1 interacting with plastid-encoded RNA polymerase complex proteins is essential for chloroplast development.</title>
        <authorList>
            <person name="Jiang D."/>
            <person name="Tang R."/>
            <person name="Shi Y."/>
            <person name="Ke X."/>
            <person name="Wang Y."/>
            <person name="Che Y."/>
            <person name="Luan S."/>
            <person name="Hou X."/>
        </authorList>
    </citation>
    <scope>INTERACTION WITH SL1/MTERF3</scope>
    <source>
        <strain>cv. Columbia</strain>
    </source>
</reference>
<keyword id="KW-0150">Chloroplast</keyword>
<keyword id="KW-0489">Methyltransferase</keyword>
<keyword id="KW-0934">Plastid</keyword>
<keyword id="KW-1185">Reference proteome</keyword>
<keyword id="KW-0949">S-adenosyl-L-methionine</keyword>
<keyword id="KW-0793">Thylakoid</keyword>
<keyword id="KW-0804">Transcription</keyword>
<keyword id="KW-0805">Transcription regulation</keyword>
<keyword id="KW-0808">Transferase</keyword>
<keyword id="KW-0809">Transit peptide</keyword>
<name>PTA14_ARATH</name>
<dbReference type="EC" id="2.1.1.-" evidence="2"/>
<dbReference type="EMBL" id="AL021637">
    <property type="protein sequence ID" value="CAA16620.1"/>
    <property type="status" value="ALT_SEQ"/>
    <property type="molecule type" value="Genomic_DNA"/>
</dbReference>
<dbReference type="EMBL" id="AL021637">
    <property type="protein sequence ID" value="CAA16621.1"/>
    <property type="status" value="ALT_SEQ"/>
    <property type="molecule type" value="Genomic_DNA"/>
</dbReference>
<dbReference type="EMBL" id="AL161552">
    <property type="protein sequence ID" value="CAB79012.1"/>
    <property type="status" value="ALT_SEQ"/>
    <property type="molecule type" value="Genomic_DNA"/>
</dbReference>
<dbReference type="EMBL" id="AL161552">
    <property type="protein sequence ID" value="CAB79013.1"/>
    <property type="status" value="ALT_SEQ"/>
    <property type="molecule type" value="Genomic_DNA"/>
</dbReference>
<dbReference type="EMBL" id="CP002687">
    <property type="protein sequence ID" value="AEE84278.1"/>
    <property type="molecule type" value="Genomic_DNA"/>
</dbReference>
<dbReference type="EMBL" id="BT004184">
    <property type="protein sequence ID" value="AAO42203.1"/>
    <property type="molecule type" value="mRNA"/>
</dbReference>
<dbReference type="EMBL" id="BT005475">
    <property type="protein sequence ID" value="AAO63895.1"/>
    <property type="molecule type" value="mRNA"/>
</dbReference>
<dbReference type="EMBL" id="AK221394">
    <property type="protein sequence ID" value="BAD94330.1"/>
    <property type="molecule type" value="mRNA"/>
</dbReference>
<dbReference type="EMBL" id="AK230198">
    <property type="protein sequence ID" value="BAF02006.1"/>
    <property type="molecule type" value="mRNA"/>
</dbReference>
<dbReference type="EMBL" id="AK230206">
    <property type="protein sequence ID" value="BAF02014.1"/>
    <property type="molecule type" value="mRNA"/>
</dbReference>
<dbReference type="PIR" id="T04896">
    <property type="entry name" value="T04896"/>
</dbReference>
<dbReference type="PIR" id="T04897">
    <property type="entry name" value="T04897"/>
</dbReference>
<dbReference type="RefSeq" id="NP_193746.3">
    <property type="nucleotide sequence ID" value="NM_118132.5"/>
</dbReference>
<dbReference type="SMR" id="Q84JF5"/>
<dbReference type="FunCoup" id="Q84JF5">
    <property type="interactions" value="967"/>
</dbReference>
<dbReference type="IntAct" id="Q84JF5">
    <property type="interactions" value="2"/>
</dbReference>
<dbReference type="MINT" id="Q84JF5"/>
<dbReference type="STRING" id="3702.Q84JF5"/>
<dbReference type="PaxDb" id="3702-AT4G20130.1"/>
<dbReference type="ProteomicsDB" id="248777"/>
<dbReference type="EnsemblPlants" id="AT4G20130.1">
    <property type="protein sequence ID" value="AT4G20130.1"/>
    <property type="gene ID" value="AT4G20130"/>
</dbReference>
<dbReference type="GeneID" id="827759"/>
<dbReference type="Gramene" id="AT4G20130.1">
    <property type="protein sequence ID" value="AT4G20130.1"/>
    <property type="gene ID" value="AT4G20130"/>
</dbReference>
<dbReference type="KEGG" id="ath:AT4G20130"/>
<dbReference type="Araport" id="AT4G20130"/>
<dbReference type="TAIR" id="AT4G20130">
    <property type="gene designation" value="PTAC14"/>
</dbReference>
<dbReference type="eggNOG" id="KOG1337">
    <property type="taxonomic scope" value="Eukaryota"/>
</dbReference>
<dbReference type="HOGENOM" id="CLU_027029_1_0_1"/>
<dbReference type="InParanoid" id="Q84JF5"/>
<dbReference type="OMA" id="MRAYGVQ"/>
<dbReference type="PhylomeDB" id="Q84JF5"/>
<dbReference type="PRO" id="PR:Q84JF5"/>
<dbReference type="Proteomes" id="UP000006548">
    <property type="component" value="Chromosome 4"/>
</dbReference>
<dbReference type="ExpressionAtlas" id="Q84JF5">
    <property type="expression patterns" value="baseline and differential"/>
</dbReference>
<dbReference type="GO" id="GO:0042644">
    <property type="term" value="C:chloroplast nucleoid"/>
    <property type="evidence" value="ECO:0007005"/>
    <property type="project" value="TAIR"/>
</dbReference>
<dbReference type="GO" id="GO:0009534">
    <property type="term" value="C:chloroplast thylakoid"/>
    <property type="evidence" value="ECO:0000314"/>
    <property type="project" value="UniProtKB"/>
</dbReference>
<dbReference type="GO" id="GO:0000427">
    <property type="term" value="C:plastid-encoded plastid RNA polymerase complex"/>
    <property type="evidence" value="ECO:0000314"/>
    <property type="project" value="UniProtKB"/>
</dbReference>
<dbReference type="GO" id="GO:0008168">
    <property type="term" value="F:methyltransferase activity"/>
    <property type="evidence" value="ECO:0007669"/>
    <property type="project" value="UniProtKB-KW"/>
</dbReference>
<dbReference type="GO" id="GO:0009658">
    <property type="term" value="P:chloroplast organization"/>
    <property type="evidence" value="ECO:0000315"/>
    <property type="project" value="UniProtKB"/>
</dbReference>
<dbReference type="GO" id="GO:0032259">
    <property type="term" value="P:methylation"/>
    <property type="evidence" value="ECO:0007669"/>
    <property type="project" value="UniProtKB-KW"/>
</dbReference>
<dbReference type="GO" id="GO:0042793">
    <property type="term" value="P:plastid transcription"/>
    <property type="evidence" value="ECO:0000315"/>
    <property type="project" value="UniProtKB"/>
</dbReference>
<dbReference type="GO" id="GO:0009735">
    <property type="term" value="P:response to cytokinin"/>
    <property type="evidence" value="ECO:0000270"/>
    <property type="project" value="UniProtKB"/>
</dbReference>
<dbReference type="GO" id="GO:0009416">
    <property type="term" value="P:response to light stimulus"/>
    <property type="evidence" value="ECO:0000270"/>
    <property type="project" value="UniProtKB"/>
</dbReference>
<dbReference type="GO" id="GO:0010027">
    <property type="term" value="P:thylakoid membrane organization"/>
    <property type="evidence" value="ECO:0000315"/>
    <property type="project" value="UniProtKB"/>
</dbReference>
<dbReference type="CDD" id="cd10527">
    <property type="entry name" value="SET_LSMT"/>
    <property type="match status" value="1"/>
</dbReference>
<dbReference type="FunFam" id="3.90.1420.10:FF:000011">
    <property type="entry name" value="Plastid transcriptionally active 14"/>
    <property type="match status" value="1"/>
</dbReference>
<dbReference type="FunFam" id="3.90.1410.10:FF:000010">
    <property type="entry name" value="Protein PLASTID TRANSCRIPTIONALLY ACTIVE 14"/>
    <property type="match status" value="1"/>
</dbReference>
<dbReference type="Gene3D" id="3.90.1420.10">
    <property type="entry name" value="Rubisco LSMT, substrate-binding domain"/>
    <property type="match status" value="1"/>
</dbReference>
<dbReference type="Gene3D" id="3.90.1410.10">
    <property type="entry name" value="set domain protein methyltransferase, domain 1"/>
    <property type="match status" value="1"/>
</dbReference>
<dbReference type="InterPro" id="IPR015353">
    <property type="entry name" value="Rubisco_LSMT_subst-bd"/>
</dbReference>
<dbReference type="InterPro" id="IPR036464">
    <property type="entry name" value="Rubisco_LSMT_subst-bd_sf"/>
</dbReference>
<dbReference type="InterPro" id="IPR001214">
    <property type="entry name" value="SET_dom"/>
</dbReference>
<dbReference type="InterPro" id="IPR046341">
    <property type="entry name" value="SET_dom_sf"/>
</dbReference>
<dbReference type="InterPro" id="IPR050600">
    <property type="entry name" value="SETD3_SETD6_MTase"/>
</dbReference>
<dbReference type="PANTHER" id="PTHR13271:SF54">
    <property type="entry name" value="PROTEIN PLASTID TRANSCRIPTIONALLY ACTIVE 14"/>
    <property type="match status" value="1"/>
</dbReference>
<dbReference type="PANTHER" id="PTHR13271">
    <property type="entry name" value="UNCHARACTERIZED PUTATIVE METHYLTRANSFERASE"/>
    <property type="match status" value="1"/>
</dbReference>
<dbReference type="Pfam" id="PF09273">
    <property type="entry name" value="Rubis-subs-bind"/>
    <property type="match status" value="1"/>
</dbReference>
<dbReference type="Pfam" id="PF00856">
    <property type="entry name" value="SET"/>
    <property type="match status" value="1"/>
</dbReference>
<dbReference type="SUPFAM" id="SSF81822">
    <property type="entry name" value="RuBisCo LSMT C-terminal, substrate-binding domain"/>
    <property type="match status" value="1"/>
</dbReference>
<dbReference type="SUPFAM" id="SSF82199">
    <property type="entry name" value="SET domain"/>
    <property type="match status" value="1"/>
</dbReference>
<dbReference type="PROSITE" id="PS50280">
    <property type="entry name" value="SET"/>
    <property type="match status" value="1"/>
</dbReference>
<accession>Q84JF5</accession>
<accession>O49439</accession>
<accession>O49440</accession>
<accession>Q0WLK1</accession>
<accession>Q56YC9</accession>
<sequence length="483" mass="55611">MASSVSLQFLTNTFISKPQGFCNGIVSAPRPRSNLLRDRQNGVRPIKVASIETQPFPLFQSPASEESSSSELETADPDFYKIGYVRSVRAYGVEFKEGPDGFGVYASKDIEPRRRARVIMEIPLELMITIRQKHPWMFFPDIVPIGHPIFDIINSTDPEIDWDIRLACLLLFSFDRDDHFWRLYGDFLPAADECSSLLLATEEDLAELQDPDLVSTIRQQQKRILDFWEKNWHSGVPLKIKRLAEDPERFIWAVSMAQTRCISMQTRVGALVQELNMMIPYADMLNHSFEPNCFLHWRPKDRMLEVMSNAGQDIKKGEEMTINYMPGQKNNMLMERYGFSTPVNPWDAIKFSGDSRIHLNSFLSVFNIYGLPEEYYHDSELSRGDTFVDGAVIAAARTLPTWSDIDLPPIPSAERKAVKELQDECRKMLAEYPTTAEQDQKLLDSMSEARTTFATAVKYRMHRKMFIGKIIKALDIYQERLLY</sequence>
<gene>
    <name evidence="7" type="primary">PTAC14</name>
    <name evidence="8" type="synonym">PAP7</name>
    <name evidence="7" type="synonym">TAC14</name>
    <name evidence="10" type="ordered locus">At4g20130</name>
    <name evidence="11" type="ORF">F18F4</name>
    <name evidence="12" type="ORF">F1C12.4</name>
</gene>
<organism>
    <name type="scientific">Arabidopsis thaliana</name>
    <name type="common">Mouse-ear cress</name>
    <dbReference type="NCBI Taxonomy" id="3702"/>
    <lineage>
        <taxon>Eukaryota</taxon>
        <taxon>Viridiplantae</taxon>
        <taxon>Streptophyta</taxon>
        <taxon>Embryophyta</taxon>
        <taxon>Tracheophyta</taxon>
        <taxon>Spermatophyta</taxon>
        <taxon>Magnoliopsida</taxon>
        <taxon>eudicotyledons</taxon>
        <taxon>Gunneridae</taxon>
        <taxon>Pentapetalae</taxon>
        <taxon>rosids</taxon>
        <taxon>malvids</taxon>
        <taxon>Brassicales</taxon>
        <taxon>Brassicaceae</taxon>
        <taxon>Camelineae</taxon>
        <taxon>Arabidopsis</taxon>
    </lineage>
</organism>
<proteinExistence type="evidence at protein level"/>
<protein>
    <recommendedName>
        <fullName evidence="7">Protein PLASTID TRANSCRIPTIONALLY ACTIVE 14</fullName>
        <shortName evidence="7">pTAC14</shortName>
        <ecNumber evidence="2">2.1.1.-</ecNumber>
    </recommendedName>
    <alternativeName>
        <fullName evidence="8">Plastid-encoded RNA polymerase-associated protein 7</fullName>
        <shortName evidence="8">PEP-associated protein 7</shortName>
    </alternativeName>
</protein>
<feature type="transit peptide" description="Chloroplast" evidence="1">
    <location>
        <begin position="1"/>
        <end position="62"/>
    </location>
</feature>
<feature type="chain" id="PRO_0000433436" description="Protein PLASTID TRANSCRIPTIONALLY ACTIVE 14" evidence="1">
    <location>
        <begin position="63"/>
        <end position="483"/>
    </location>
</feature>
<feature type="domain" description="SET" evidence="2">
    <location>
        <begin position="80"/>
        <end position="325"/>
    </location>
</feature>
<feature type="binding site" evidence="2">
    <location>
        <position position="324"/>
    </location>
    <ligand>
        <name>S-adenosyl-L-methionine</name>
        <dbReference type="ChEBI" id="CHEBI:59789"/>
    </ligand>
</feature>
<feature type="sequence conflict" description="In Ref. 4; BAD94330." evidence="9" ref="4">
    <original>I</original>
    <variation>V</variation>
    <location>
        <position position="119"/>
    </location>
</feature>
<feature type="sequence conflict" description="In Ref. 4; BAD94330." evidence="9" ref="4">
    <original>K</original>
    <variation>R</variation>
    <location>
        <position position="300"/>
    </location>
</feature>
<feature type="sequence conflict" description="In Ref. 4; BAF02006." evidence="9" ref="4">
    <original>R</original>
    <variation>S</variation>
    <location>
        <position position="415"/>
    </location>
</feature>
<comment type="function">
    <text evidence="3">Essential for chloroplast development, especially for thylakoid formation. Involved in plastid gene expression, probably by maintaining plastid-encoded RNA polymerase (PEP) activity.</text>
</comment>
<comment type="subunit">
    <text evidence="3 4 6">Component of the transcriptionally active chromosome (TAC) complexes. Interacts with PTAC12/HMR/PAP5 and PTAC7. Binds to SL1/MTERF3 (PubMed:33391315).</text>
</comment>
<comment type="interaction">
    <interactant intactId="EBI-7890317">
        <id>Q84JF5</id>
    </interactant>
    <interactant intactId="EBI-2460434">
        <id>Q9LRH6</id>
        <label>GATA25</label>
    </interactant>
    <organismsDiffer>false</organismsDiffer>
    <experiments>3</experiments>
</comment>
<comment type="subcellular location">
    <subcellularLocation>
        <location evidence="3">Plastid</location>
        <location evidence="3">Chloroplast thylakoid</location>
    </subcellularLocation>
</comment>
<comment type="tissue specificity">
    <text evidence="3">Mostly expressed in leaves, flowers and seedlings, and, to a lower extent, in stems and roots.</text>
</comment>
<comment type="induction">
    <text evidence="3 5">By light (PubMed:22010110). Induced by cytokinin (e.g. trans-zeatin) (PubMed:33322466).</text>
</comment>
<comment type="disruption phenotype">
    <text evidence="3">Seedling lethal, even with Suc as a carbon source. Impaired thylakoid formation in the initial process of chloroplast development leading to albino seedlings unable to grow photoautotrophically. Reduced plastid-encoded RNA polymerase (PEP) activity.</text>
</comment>
<comment type="similarity">
    <text evidence="2">Belongs to the class V-like SAM-binding methyltransferase superfamily.</text>
</comment>
<comment type="sequence caution" evidence="9">
    <conflict type="erroneous gene model prediction">
        <sequence resource="EMBL-CDS" id="CAA16620"/>
    </conflict>
</comment>
<comment type="sequence caution" evidence="9">
    <conflict type="erroneous gene model prediction">
        <sequence resource="EMBL-CDS" id="CAA16621"/>
    </conflict>
</comment>
<comment type="sequence caution" evidence="9">
    <conflict type="erroneous gene model prediction">
        <sequence resource="EMBL-CDS" id="CAB79012"/>
    </conflict>
</comment>
<comment type="sequence caution" evidence="9">
    <conflict type="erroneous gene model prediction">
        <sequence resource="EMBL-CDS" id="CAB79013"/>
    </conflict>
</comment>